<name>ACKA_DESHD</name>
<protein>
    <recommendedName>
        <fullName evidence="1">Acetate kinase</fullName>
        <ecNumber evidence="1">2.7.2.1</ecNumber>
    </recommendedName>
    <alternativeName>
        <fullName evidence="1">Acetokinase</fullName>
    </alternativeName>
</protein>
<organism>
    <name type="scientific">Desulfitobacterium hafniense (strain DSM 10664 / DCB-2)</name>
    <dbReference type="NCBI Taxonomy" id="272564"/>
    <lineage>
        <taxon>Bacteria</taxon>
        <taxon>Bacillati</taxon>
        <taxon>Bacillota</taxon>
        <taxon>Clostridia</taxon>
        <taxon>Eubacteriales</taxon>
        <taxon>Desulfitobacteriaceae</taxon>
        <taxon>Desulfitobacterium</taxon>
    </lineage>
</organism>
<feature type="chain" id="PRO_1000116801" description="Acetate kinase">
    <location>
        <begin position="1"/>
        <end position="399"/>
    </location>
</feature>
<feature type="active site" description="Proton donor/acceptor" evidence="1">
    <location>
        <position position="148"/>
    </location>
</feature>
<feature type="binding site" evidence="1">
    <location>
        <position position="7"/>
    </location>
    <ligand>
        <name>Mg(2+)</name>
        <dbReference type="ChEBI" id="CHEBI:18420"/>
    </ligand>
</feature>
<feature type="binding site" evidence="1">
    <location>
        <position position="14"/>
    </location>
    <ligand>
        <name>ATP</name>
        <dbReference type="ChEBI" id="CHEBI:30616"/>
    </ligand>
</feature>
<feature type="binding site" evidence="1">
    <location>
        <position position="91"/>
    </location>
    <ligand>
        <name>substrate</name>
    </ligand>
</feature>
<feature type="binding site" evidence="1">
    <location>
        <begin position="208"/>
        <end position="212"/>
    </location>
    <ligand>
        <name>ATP</name>
        <dbReference type="ChEBI" id="CHEBI:30616"/>
    </ligand>
</feature>
<feature type="binding site" evidence="1">
    <location>
        <begin position="283"/>
        <end position="285"/>
    </location>
    <ligand>
        <name>ATP</name>
        <dbReference type="ChEBI" id="CHEBI:30616"/>
    </ligand>
</feature>
<feature type="binding site" evidence="1">
    <location>
        <begin position="331"/>
        <end position="335"/>
    </location>
    <ligand>
        <name>ATP</name>
        <dbReference type="ChEBI" id="CHEBI:30616"/>
    </ligand>
</feature>
<feature type="binding site" evidence="1">
    <location>
        <position position="384"/>
    </location>
    <ligand>
        <name>Mg(2+)</name>
        <dbReference type="ChEBI" id="CHEBI:18420"/>
    </ligand>
</feature>
<feature type="site" description="Transition state stabilizer" evidence="1">
    <location>
        <position position="180"/>
    </location>
</feature>
<feature type="site" description="Transition state stabilizer" evidence="1">
    <location>
        <position position="241"/>
    </location>
</feature>
<dbReference type="EC" id="2.7.2.1" evidence="1"/>
<dbReference type="EMBL" id="CP001336">
    <property type="protein sequence ID" value="ACL21842.1"/>
    <property type="molecule type" value="Genomic_DNA"/>
</dbReference>
<dbReference type="RefSeq" id="WP_015944823.1">
    <property type="nucleotide sequence ID" value="NC_011830.1"/>
</dbReference>
<dbReference type="SMR" id="B8FRT2"/>
<dbReference type="KEGG" id="dhd:Dhaf_3826"/>
<dbReference type="HOGENOM" id="CLU_020352_0_1_9"/>
<dbReference type="UniPathway" id="UPA00340">
    <property type="reaction ID" value="UER00458"/>
</dbReference>
<dbReference type="Proteomes" id="UP000007726">
    <property type="component" value="Chromosome"/>
</dbReference>
<dbReference type="GO" id="GO:0005737">
    <property type="term" value="C:cytoplasm"/>
    <property type="evidence" value="ECO:0007669"/>
    <property type="project" value="UniProtKB-SubCell"/>
</dbReference>
<dbReference type="GO" id="GO:0008776">
    <property type="term" value="F:acetate kinase activity"/>
    <property type="evidence" value="ECO:0007669"/>
    <property type="project" value="UniProtKB-UniRule"/>
</dbReference>
<dbReference type="GO" id="GO:0005524">
    <property type="term" value="F:ATP binding"/>
    <property type="evidence" value="ECO:0007669"/>
    <property type="project" value="UniProtKB-KW"/>
</dbReference>
<dbReference type="GO" id="GO:0000287">
    <property type="term" value="F:magnesium ion binding"/>
    <property type="evidence" value="ECO:0007669"/>
    <property type="project" value="UniProtKB-UniRule"/>
</dbReference>
<dbReference type="GO" id="GO:0006083">
    <property type="term" value="P:acetate metabolic process"/>
    <property type="evidence" value="ECO:0007669"/>
    <property type="project" value="TreeGrafter"/>
</dbReference>
<dbReference type="GO" id="GO:0006085">
    <property type="term" value="P:acetyl-CoA biosynthetic process"/>
    <property type="evidence" value="ECO:0007669"/>
    <property type="project" value="UniProtKB-UniRule"/>
</dbReference>
<dbReference type="CDD" id="cd24010">
    <property type="entry name" value="ASKHA_NBD_AcK_PK"/>
    <property type="match status" value="1"/>
</dbReference>
<dbReference type="Gene3D" id="3.30.420.40">
    <property type="match status" value="2"/>
</dbReference>
<dbReference type="HAMAP" id="MF_00020">
    <property type="entry name" value="Acetate_kinase"/>
    <property type="match status" value="1"/>
</dbReference>
<dbReference type="InterPro" id="IPR004372">
    <property type="entry name" value="Ac/propionate_kinase"/>
</dbReference>
<dbReference type="InterPro" id="IPR000890">
    <property type="entry name" value="Aliphatic_acid_kin_short-chain"/>
</dbReference>
<dbReference type="InterPro" id="IPR023865">
    <property type="entry name" value="Aliphatic_acid_kinase_CS"/>
</dbReference>
<dbReference type="InterPro" id="IPR043129">
    <property type="entry name" value="ATPase_NBD"/>
</dbReference>
<dbReference type="NCBIfam" id="TIGR00016">
    <property type="entry name" value="ackA"/>
    <property type="match status" value="1"/>
</dbReference>
<dbReference type="PANTHER" id="PTHR21060">
    <property type="entry name" value="ACETATE KINASE"/>
    <property type="match status" value="1"/>
</dbReference>
<dbReference type="PANTHER" id="PTHR21060:SF15">
    <property type="entry name" value="ACETATE KINASE-RELATED"/>
    <property type="match status" value="1"/>
</dbReference>
<dbReference type="Pfam" id="PF00871">
    <property type="entry name" value="Acetate_kinase"/>
    <property type="match status" value="1"/>
</dbReference>
<dbReference type="PIRSF" id="PIRSF000722">
    <property type="entry name" value="Acetate_prop_kin"/>
    <property type="match status" value="1"/>
</dbReference>
<dbReference type="PRINTS" id="PR00471">
    <property type="entry name" value="ACETATEKNASE"/>
</dbReference>
<dbReference type="SUPFAM" id="SSF53067">
    <property type="entry name" value="Actin-like ATPase domain"/>
    <property type="match status" value="2"/>
</dbReference>
<dbReference type="PROSITE" id="PS01075">
    <property type="entry name" value="ACETATE_KINASE_1"/>
    <property type="match status" value="1"/>
</dbReference>
<dbReference type="PROSITE" id="PS01076">
    <property type="entry name" value="ACETATE_KINASE_2"/>
    <property type="match status" value="1"/>
</dbReference>
<reference key="1">
    <citation type="journal article" date="2012" name="BMC Microbiol.">
        <title>Genome sequence of Desulfitobacterium hafniense DCB-2, a Gram-positive anaerobe capable of dehalogenation and metal reduction.</title>
        <authorList>
            <person name="Kim S.H."/>
            <person name="Harzman C."/>
            <person name="Davis J.K."/>
            <person name="Hutcheson R."/>
            <person name="Broderick J.B."/>
            <person name="Marsh T.L."/>
            <person name="Tiedje J.M."/>
        </authorList>
    </citation>
    <scope>NUCLEOTIDE SEQUENCE [LARGE SCALE GENOMIC DNA]</scope>
    <source>
        <strain>DSM 10664 / DCB-2</strain>
    </source>
</reference>
<gene>
    <name evidence="1" type="primary">ackA</name>
    <name type="ordered locus">Dhaf_3826</name>
</gene>
<evidence type="ECO:0000255" key="1">
    <source>
        <dbReference type="HAMAP-Rule" id="MF_00020"/>
    </source>
</evidence>
<proteinExistence type="inferred from homology"/>
<accession>B8FRT2</accession>
<keyword id="KW-0067">ATP-binding</keyword>
<keyword id="KW-0963">Cytoplasm</keyword>
<keyword id="KW-0418">Kinase</keyword>
<keyword id="KW-0460">Magnesium</keyword>
<keyword id="KW-0479">Metal-binding</keyword>
<keyword id="KW-0547">Nucleotide-binding</keyword>
<keyword id="KW-0808">Transferase</keyword>
<sequence>MKILVINCGSSSLKYQLLDMDTQTPIAKGLVERIGLPGAVLTHRPADGEKEIITAEIPNHTVAIQLVLDALVNPEYGVVKSLEEIGSVGHRVVHGGEKFASSVLITDEVMQAIEECIELAPLHNPPNIAGIEACQKLMPGVPQVAVFDTAFHQTMPPHAYLYGLPYEFYEKYKIRKYGFHGTSHKYVSQRAAKLLNRPAEGLKLISCHLGNGSSITAIKDGKSIETSMGFTPLEGLMMGTRSGDLDPAIVSFIQQKENLSSDEVNDFLNKKCGVLGLSGVSSDFRDIEQARDQGNYRAALALDVFSHDVKKYIGSYAAVLNGADAIIFTAGLGENSAEMREAVVDGLQYLGAKLDLEKNKVRGKEADISAPEATCRVLVIPTNEELMIALDTLDIIQKG</sequence>
<comment type="function">
    <text evidence="1">Catalyzes the formation of acetyl phosphate from acetate and ATP. Can also catalyze the reverse reaction.</text>
</comment>
<comment type="catalytic activity">
    <reaction evidence="1">
        <text>acetate + ATP = acetyl phosphate + ADP</text>
        <dbReference type="Rhea" id="RHEA:11352"/>
        <dbReference type="ChEBI" id="CHEBI:22191"/>
        <dbReference type="ChEBI" id="CHEBI:30089"/>
        <dbReference type="ChEBI" id="CHEBI:30616"/>
        <dbReference type="ChEBI" id="CHEBI:456216"/>
        <dbReference type="EC" id="2.7.2.1"/>
    </reaction>
</comment>
<comment type="cofactor">
    <cofactor evidence="1">
        <name>Mg(2+)</name>
        <dbReference type="ChEBI" id="CHEBI:18420"/>
    </cofactor>
    <cofactor evidence="1">
        <name>Mn(2+)</name>
        <dbReference type="ChEBI" id="CHEBI:29035"/>
    </cofactor>
    <text evidence="1">Mg(2+). Can also accept Mn(2+).</text>
</comment>
<comment type="pathway">
    <text evidence="1">Metabolic intermediate biosynthesis; acetyl-CoA biosynthesis; acetyl-CoA from acetate: step 1/2.</text>
</comment>
<comment type="subunit">
    <text evidence="1">Homodimer.</text>
</comment>
<comment type="subcellular location">
    <subcellularLocation>
        <location evidence="1">Cytoplasm</location>
    </subcellularLocation>
</comment>
<comment type="similarity">
    <text evidence="1">Belongs to the acetokinase family.</text>
</comment>